<name>EFG_PSESM</name>
<proteinExistence type="inferred from homology"/>
<organism>
    <name type="scientific">Pseudomonas syringae pv. tomato (strain ATCC BAA-871 / DC3000)</name>
    <dbReference type="NCBI Taxonomy" id="223283"/>
    <lineage>
        <taxon>Bacteria</taxon>
        <taxon>Pseudomonadati</taxon>
        <taxon>Pseudomonadota</taxon>
        <taxon>Gammaproteobacteria</taxon>
        <taxon>Pseudomonadales</taxon>
        <taxon>Pseudomonadaceae</taxon>
        <taxon>Pseudomonas</taxon>
    </lineage>
</organism>
<accession>Q889X4</accession>
<feature type="chain" id="PRO_0000091188" description="Elongation factor G">
    <location>
        <begin position="1"/>
        <end position="701"/>
    </location>
</feature>
<feature type="domain" description="tr-type G">
    <location>
        <begin position="8"/>
        <end position="291"/>
    </location>
</feature>
<feature type="binding site" evidence="1">
    <location>
        <begin position="17"/>
        <end position="24"/>
    </location>
    <ligand>
        <name>GTP</name>
        <dbReference type="ChEBI" id="CHEBI:37565"/>
    </ligand>
</feature>
<feature type="binding site" evidence="1">
    <location>
        <begin position="89"/>
        <end position="93"/>
    </location>
    <ligand>
        <name>GTP</name>
        <dbReference type="ChEBI" id="CHEBI:37565"/>
    </ligand>
</feature>
<feature type="binding site" evidence="1">
    <location>
        <begin position="143"/>
        <end position="146"/>
    </location>
    <ligand>
        <name>GTP</name>
        <dbReference type="ChEBI" id="CHEBI:37565"/>
    </ligand>
</feature>
<reference key="1">
    <citation type="journal article" date="2003" name="Proc. Natl. Acad. Sci. U.S.A.">
        <title>The complete genome sequence of the Arabidopsis and tomato pathogen Pseudomonas syringae pv. tomato DC3000.</title>
        <authorList>
            <person name="Buell C.R."/>
            <person name="Joardar V."/>
            <person name="Lindeberg M."/>
            <person name="Selengut J."/>
            <person name="Paulsen I.T."/>
            <person name="Gwinn M.L."/>
            <person name="Dodson R.J."/>
            <person name="DeBoy R.T."/>
            <person name="Durkin A.S."/>
            <person name="Kolonay J.F."/>
            <person name="Madupu R."/>
            <person name="Daugherty S.C."/>
            <person name="Brinkac L.M."/>
            <person name="Beanan M.J."/>
            <person name="Haft D.H."/>
            <person name="Nelson W.C."/>
            <person name="Davidsen T.M."/>
            <person name="Zafar N."/>
            <person name="Zhou L."/>
            <person name="Liu J."/>
            <person name="Yuan Q."/>
            <person name="Khouri H.M."/>
            <person name="Fedorova N.B."/>
            <person name="Tran B."/>
            <person name="Russell D."/>
            <person name="Berry K.J."/>
            <person name="Utterback T.R."/>
            <person name="Van Aken S.E."/>
            <person name="Feldblyum T.V."/>
            <person name="D'Ascenzo M."/>
            <person name="Deng W.-L."/>
            <person name="Ramos A.R."/>
            <person name="Alfano J.R."/>
            <person name="Cartinhour S."/>
            <person name="Chatterjee A.K."/>
            <person name="Delaney T.P."/>
            <person name="Lazarowitz S.G."/>
            <person name="Martin G.B."/>
            <person name="Schneider D.J."/>
            <person name="Tang X."/>
            <person name="Bender C.L."/>
            <person name="White O."/>
            <person name="Fraser C.M."/>
            <person name="Collmer A."/>
        </authorList>
    </citation>
    <scope>NUCLEOTIDE SEQUENCE [LARGE SCALE GENOMIC DNA]</scope>
    <source>
        <strain>ATCC BAA-871 / DC3000</strain>
    </source>
</reference>
<protein>
    <recommendedName>
        <fullName evidence="1">Elongation factor G</fullName>
        <shortName evidence="1">EF-G</shortName>
    </recommendedName>
</protein>
<sequence>MARTTPISRYRNIGIVAHVDAGKTTTTERVLFYTGKSHKMGEVHDGAATTDWMVQEQERGITITSAAITAFWQGSEKQHKDQYRFNVIDTPGHVDFTIEVERSLRVLDGAVVVFCGTSGVEPQSETVWRQANKYGVPRIVYVNKMDRAGANFLRVIAQIKQRLGHTPVPIQLAIGAEDNFQGQIDLMAMEAVYWNDSDKGMVPVRKPIPAELQELADEWRGNMVEAAAEASEELMNKYLEGEELTNEEIKAALRQRTIAGEIVLAVCGSSFKNKGVPLVLDAVIDYLPAPIDIPAIKGSDPDNEEILMERHADDSEPFSALAFKIATDPFVGTLTFVRVYSGVLASGDGVINSVKGKKERVGRMVQMHANAREEIKEVRAGDIAALIGMKDVTTGETLCNADKPIILVRMDFPEPVISVAVEPKTKDDQEKMGIALGKLAQEDPSFRVKTDEETGQTIISGMGELHLDILVDRMRREFNVEANIGKPQVSYRERITKNCEIEGKFVRQSGGRGQFGHCWIRFAPADEGQEGLQFVNEVVGGVVPKEYIPAIQKGIEEQMKNGVVAGYPLIGLKATVFDGSYHDVDSNEMAFKVAASMATKQLAQKGGGELLEPIMAVEVVTPEDYMGDVMGDLNRRRGMILGMEDTVSGKVIRAEVPLGEMFGYATDVRSMSQGRASYSMEFKKYNTAPSHIVETVTKKQG</sequence>
<evidence type="ECO:0000255" key="1">
    <source>
        <dbReference type="HAMAP-Rule" id="MF_00054"/>
    </source>
</evidence>
<keyword id="KW-0963">Cytoplasm</keyword>
<keyword id="KW-0251">Elongation factor</keyword>
<keyword id="KW-0342">GTP-binding</keyword>
<keyword id="KW-0547">Nucleotide-binding</keyword>
<keyword id="KW-0648">Protein biosynthesis</keyword>
<keyword id="KW-1185">Reference proteome</keyword>
<comment type="function">
    <text evidence="1">Catalyzes the GTP-dependent ribosomal translocation step during translation elongation. During this step, the ribosome changes from the pre-translocational (PRE) to the post-translocational (POST) state as the newly formed A-site-bound peptidyl-tRNA and P-site-bound deacylated tRNA move to the P and E sites, respectively. Catalyzes the coordinated movement of the two tRNA molecules, the mRNA and conformational changes in the ribosome.</text>
</comment>
<comment type="subcellular location">
    <subcellularLocation>
        <location evidence="1">Cytoplasm</location>
    </subcellularLocation>
</comment>
<comment type="similarity">
    <text evidence="1">Belongs to the TRAFAC class translation factor GTPase superfamily. Classic translation factor GTPase family. EF-G/EF-2 subfamily.</text>
</comment>
<gene>
    <name evidence="1" type="primary">fusA</name>
    <name type="ordered locus">PSPTO_0623</name>
</gene>
<dbReference type="EMBL" id="AE016853">
    <property type="protein sequence ID" value="AAO54165.1"/>
    <property type="molecule type" value="Genomic_DNA"/>
</dbReference>
<dbReference type="RefSeq" id="NP_790470.1">
    <property type="nucleotide sequence ID" value="NC_004578.1"/>
</dbReference>
<dbReference type="RefSeq" id="WP_005768927.1">
    <property type="nucleotide sequence ID" value="NC_004578.1"/>
</dbReference>
<dbReference type="SMR" id="Q889X4"/>
<dbReference type="STRING" id="223283.PSPTO_0623"/>
<dbReference type="GeneID" id="1182243"/>
<dbReference type="KEGG" id="pst:PSPTO_0623"/>
<dbReference type="PATRIC" id="fig|223283.9.peg.629"/>
<dbReference type="eggNOG" id="COG0480">
    <property type="taxonomic scope" value="Bacteria"/>
</dbReference>
<dbReference type="HOGENOM" id="CLU_002794_4_1_6"/>
<dbReference type="OrthoDB" id="9804431at2"/>
<dbReference type="PhylomeDB" id="Q889X4"/>
<dbReference type="Proteomes" id="UP000002515">
    <property type="component" value="Chromosome"/>
</dbReference>
<dbReference type="GO" id="GO:0005737">
    <property type="term" value="C:cytoplasm"/>
    <property type="evidence" value="ECO:0007669"/>
    <property type="project" value="UniProtKB-SubCell"/>
</dbReference>
<dbReference type="GO" id="GO:0005525">
    <property type="term" value="F:GTP binding"/>
    <property type="evidence" value="ECO:0007669"/>
    <property type="project" value="UniProtKB-UniRule"/>
</dbReference>
<dbReference type="GO" id="GO:0003924">
    <property type="term" value="F:GTPase activity"/>
    <property type="evidence" value="ECO:0007669"/>
    <property type="project" value="InterPro"/>
</dbReference>
<dbReference type="GO" id="GO:0097216">
    <property type="term" value="F:guanosine tetraphosphate binding"/>
    <property type="evidence" value="ECO:0007669"/>
    <property type="project" value="UniProtKB-ARBA"/>
</dbReference>
<dbReference type="GO" id="GO:0003746">
    <property type="term" value="F:translation elongation factor activity"/>
    <property type="evidence" value="ECO:0007669"/>
    <property type="project" value="UniProtKB-UniRule"/>
</dbReference>
<dbReference type="GO" id="GO:0032790">
    <property type="term" value="P:ribosome disassembly"/>
    <property type="evidence" value="ECO:0007669"/>
    <property type="project" value="TreeGrafter"/>
</dbReference>
<dbReference type="CDD" id="cd01886">
    <property type="entry name" value="EF-G"/>
    <property type="match status" value="1"/>
</dbReference>
<dbReference type="CDD" id="cd16262">
    <property type="entry name" value="EFG_III"/>
    <property type="match status" value="1"/>
</dbReference>
<dbReference type="CDD" id="cd01434">
    <property type="entry name" value="EFG_mtEFG1_IV"/>
    <property type="match status" value="1"/>
</dbReference>
<dbReference type="CDD" id="cd03713">
    <property type="entry name" value="EFG_mtEFG_C"/>
    <property type="match status" value="1"/>
</dbReference>
<dbReference type="CDD" id="cd04088">
    <property type="entry name" value="EFG_mtEFG_II"/>
    <property type="match status" value="1"/>
</dbReference>
<dbReference type="FunFam" id="2.40.30.10:FF:000006">
    <property type="entry name" value="Elongation factor G"/>
    <property type="match status" value="1"/>
</dbReference>
<dbReference type="FunFam" id="3.30.230.10:FF:000003">
    <property type="entry name" value="Elongation factor G"/>
    <property type="match status" value="1"/>
</dbReference>
<dbReference type="FunFam" id="3.30.70.240:FF:000001">
    <property type="entry name" value="Elongation factor G"/>
    <property type="match status" value="1"/>
</dbReference>
<dbReference type="FunFam" id="3.30.70.870:FF:000001">
    <property type="entry name" value="Elongation factor G"/>
    <property type="match status" value="1"/>
</dbReference>
<dbReference type="FunFam" id="3.40.50.300:FF:000029">
    <property type="entry name" value="Elongation factor G"/>
    <property type="match status" value="1"/>
</dbReference>
<dbReference type="Gene3D" id="3.30.230.10">
    <property type="match status" value="1"/>
</dbReference>
<dbReference type="Gene3D" id="3.30.70.240">
    <property type="match status" value="1"/>
</dbReference>
<dbReference type="Gene3D" id="3.30.70.870">
    <property type="entry name" value="Elongation Factor G (Translational Gtpase), domain 3"/>
    <property type="match status" value="1"/>
</dbReference>
<dbReference type="Gene3D" id="3.40.50.300">
    <property type="entry name" value="P-loop containing nucleotide triphosphate hydrolases"/>
    <property type="match status" value="1"/>
</dbReference>
<dbReference type="Gene3D" id="2.40.30.10">
    <property type="entry name" value="Translation factors"/>
    <property type="match status" value="1"/>
</dbReference>
<dbReference type="HAMAP" id="MF_00054_B">
    <property type="entry name" value="EF_G_EF_2_B"/>
    <property type="match status" value="1"/>
</dbReference>
<dbReference type="InterPro" id="IPR041095">
    <property type="entry name" value="EFG_II"/>
</dbReference>
<dbReference type="InterPro" id="IPR009022">
    <property type="entry name" value="EFG_III"/>
</dbReference>
<dbReference type="InterPro" id="IPR035647">
    <property type="entry name" value="EFG_III/V"/>
</dbReference>
<dbReference type="InterPro" id="IPR047872">
    <property type="entry name" value="EFG_IV"/>
</dbReference>
<dbReference type="InterPro" id="IPR035649">
    <property type="entry name" value="EFG_V"/>
</dbReference>
<dbReference type="InterPro" id="IPR000640">
    <property type="entry name" value="EFG_V-like"/>
</dbReference>
<dbReference type="InterPro" id="IPR004161">
    <property type="entry name" value="EFTu-like_2"/>
</dbReference>
<dbReference type="InterPro" id="IPR031157">
    <property type="entry name" value="G_TR_CS"/>
</dbReference>
<dbReference type="InterPro" id="IPR027417">
    <property type="entry name" value="P-loop_NTPase"/>
</dbReference>
<dbReference type="InterPro" id="IPR020568">
    <property type="entry name" value="Ribosomal_Su5_D2-typ_SF"/>
</dbReference>
<dbReference type="InterPro" id="IPR014721">
    <property type="entry name" value="Ribsml_uS5_D2-typ_fold_subgr"/>
</dbReference>
<dbReference type="InterPro" id="IPR005225">
    <property type="entry name" value="Small_GTP-bd"/>
</dbReference>
<dbReference type="InterPro" id="IPR000795">
    <property type="entry name" value="T_Tr_GTP-bd_dom"/>
</dbReference>
<dbReference type="InterPro" id="IPR009000">
    <property type="entry name" value="Transl_B-barrel_sf"/>
</dbReference>
<dbReference type="InterPro" id="IPR004540">
    <property type="entry name" value="Transl_elong_EFG/EF2"/>
</dbReference>
<dbReference type="InterPro" id="IPR005517">
    <property type="entry name" value="Transl_elong_EFG/EF2_IV"/>
</dbReference>
<dbReference type="NCBIfam" id="TIGR00484">
    <property type="entry name" value="EF-G"/>
    <property type="match status" value="1"/>
</dbReference>
<dbReference type="NCBIfam" id="NF009381">
    <property type="entry name" value="PRK12740.1-5"/>
    <property type="match status" value="1"/>
</dbReference>
<dbReference type="NCBIfam" id="TIGR00231">
    <property type="entry name" value="small_GTP"/>
    <property type="match status" value="1"/>
</dbReference>
<dbReference type="PANTHER" id="PTHR43261:SF1">
    <property type="entry name" value="RIBOSOME-RELEASING FACTOR 2, MITOCHONDRIAL"/>
    <property type="match status" value="1"/>
</dbReference>
<dbReference type="PANTHER" id="PTHR43261">
    <property type="entry name" value="TRANSLATION ELONGATION FACTOR G-RELATED"/>
    <property type="match status" value="1"/>
</dbReference>
<dbReference type="Pfam" id="PF00679">
    <property type="entry name" value="EFG_C"/>
    <property type="match status" value="1"/>
</dbReference>
<dbReference type="Pfam" id="PF14492">
    <property type="entry name" value="EFG_III"/>
    <property type="match status" value="1"/>
</dbReference>
<dbReference type="Pfam" id="PF03764">
    <property type="entry name" value="EFG_IV"/>
    <property type="match status" value="1"/>
</dbReference>
<dbReference type="Pfam" id="PF00009">
    <property type="entry name" value="GTP_EFTU"/>
    <property type="match status" value="1"/>
</dbReference>
<dbReference type="Pfam" id="PF03144">
    <property type="entry name" value="GTP_EFTU_D2"/>
    <property type="match status" value="1"/>
</dbReference>
<dbReference type="PRINTS" id="PR00315">
    <property type="entry name" value="ELONGATNFCT"/>
</dbReference>
<dbReference type="SMART" id="SM00838">
    <property type="entry name" value="EFG_C"/>
    <property type="match status" value="1"/>
</dbReference>
<dbReference type="SMART" id="SM00889">
    <property type="entry name" value="EFG_IV"/>
    <property type="match status" value="1"/>
</dbReference>
<dbReference type="SUPFAM" id="SSF54980">
    <property type="entry name" value="EF-G C-terminal domain-like"/>
    <property type="match status" value="2"/>
</dbReference>
<dbReference type="SUPFAM" id="SSF52540">
    <property type="entry name" value="P-loop containing nucleoside triphosphate hydrolases"/>
    <property type="match status" value="1"/>
</dbReference>
<dbReference type="SUPFAM" id="SSF54211">
    <property type="entry name" value="Ribosomal protein S5 domain 2-like"/>
    <property type="match status" value="1"/>
</dbReference>
<dbReference type="SUPFAM" id="SSF50447">
    <property type="entry name" value="Translation proteins"/>
    <property type="match status" value="1"/>
</dbReference>
<dbReference type="PROSITE" id="PS00301">
    <property type="entry name" value="G_TR_1"/>
    <property type="match status" value="1"/>
</dbReference>
<dbReference type="PROSITE" id="PS51722">
    <property type="entry name" value="G_TR_2"/>
    <property type="match status" value="1"/>
</dbReference>